<comment type="function">
    <text evidence="1">Presumably involved in the processing and regular turnover of intracellular proteins. Catalyzes the removal of unsubstituted N-terminal amino acids from various peptides.</text>
</comment>
<comment type="catalytic activity">
    <reaction evidence="1">
        <text>Release of an N-terminal amino acid, Xaa-|-Yaa-, in which Xaa is preferably Leu, but may be other amino acids including Pro although not Arg or Lys, and Yaa may be Pro. Amino acid amides and methyl esters are also readily hydrolyzed, but rates on arylamides are exceedingly low.</text>
        <dbReference type="EC" id="3.4.11.1"/>
    </reaction>
</comment>
<comment type="catalytic activity">
    <reaction evidence="1">
        <text>Release of an N-terminal amino acid, preferentially leucine, but not glutamic or aspartic acids.</text>
        <dbReference type="EC" id="3.4.11.10"/>
    </reaction>
</comment>
<comment type="cofactor">
    <cofactor evidence="1">
        <name>Mn(2+)</name>
        <dbReference type="ChEBI" id="CHEBI:29035"/>
    </cofactor>
    <text evidence="1">Binds 2 manganese ions per subunit.</text>
</comment>
<comment type="subcellular location">
    <subcellularLocation>
        <location evidence="1">Cytoplasm</location>
    </subcellularLocation>
</comment>
<comment type="similarity">
    <text evidence="1">Belongs to the peptidase M17 family.</text>
</comment>
<proteinExistence type="inferred from homology"/>
<organism>
    <name type="scientific">Burkholderia thailandensis (strain ATCC 700388 / DSM 13276 / CCUG 48851 / CIP 106301 / E264)</name>
    <dbReference type="NCBI Taxonomy" id="271848"/>
    <lineage>
        <taxon>Bacteria</taxon>
        <taxon>Pseudomonadati</taxon>
        <taxon>Pseudomonadota</taxon>
        <taxon>Betaproteobacteria</taxon>
        <taxon>Burkholderiales</taxon>
        <taxon>Burkholderiaceae</taxon>
        <taxon>Burkholderia</taxon>
        <taxon>pseudomallei group</taxon>
    </lineage>
</organism>
<accession>Q2T0C0</accession>
<sequence length="503" mass="52731">MDFSIKGCDWSKGSAKGFLTGKSDCIVLGVFEAQTLSGAALDIDEAAKGLVSRVIKAGDIDGKLGKTLFLHEVSGIGASRVLLVGLGKQDAFSQKAYNDAVKAAWRALLGTKVVQVTFTLAQLPVPERASDWGVRAAILALRNETYKFTQMKSKPDASAPALKRIVFSVDPADEKAAKIAAKQAVALANGMDLTRDLGNLPGNVCTPTYLANTAKKLAKDWGLKADVLGLKQIQALKMSSFLSVAKGSVEPPQFIVLHYQGAAAKAAPVVLVGKGITFDSGGISLKPGEGMDEMKYDMCGAGSVLGTIRAVAEMGLKINVVAIVPTCENMPAGNANKPGDIVTSMKGLTIEVLNTDAEGRLILCDALTYAERFKPAAVIDVATLTGACIIALGHHNTGLFSKDDALAGELLDASREAGDPAWRLPLDDEYQDQLKSNFADLANIGGRPAGSVTAACFLSRFAENYPWAHLDIAGTAWKSGAAKGATGRPVPLLAQFLIDRAGA</sequence>
<gene>
    <name evidence="1" type="primary">pepA</name>
    <name type="ordered locus">BTH_I0823</name>
</gene>
<protein>
    <recommendedName>
        <fullName evidence="1">Probable cytosol aminopeptidase</fullName>
        <ecNumber evidence="1">3.4.11.1</ecNumber>
    </recommendedName>
    <alternativeName>
        <fullName evidence="1">Leucine aminopeptidase</fullName>
        <shortName evidence="1">LAP</shortName>
        <ecNumber evidence="1">3.4.11.10</ecNumber>
    </alternativeName>
    <alternativeName>
        <fullName evidence="1">Leucyl aminopeptidase</fullName>
    </alternativeName>
</protein>
<reference key="1">
    <citation type="journal article" date="2005" name="BMC Genomics">
        <title>Bacterial genome adaptation to niches: divergence of the potential virulence genes in three Burkholderia species of different survival strategies.</title>
        <authorList>
            <person name="Kim H.S."/>
            <person name="Schell M.A."/>
            <person name="Yu Y."/>
            <person name="Ulrich R.L."/>
            <person name="Sarria S.H."/>
            <person name="Nierman W.C."/>
            <person name="DeShazer D."/>
        </authorList>
    </citation>
    <scope>NUCLEOTIDE SEQUENCE [LARGE SCALE GENOMIC DNA]</scope>
    <source>
        <strain>ATCC 700388 / DSM 13276 / CCUG 48851 / CIP 106301 / E264</strain>
    </source>
</reference>
<dbReference type="EC" id="3.4.11.1" evidence="1"/>
<dbReference type="EC" id="3.4.11.10" evidence="1"/>
<dbReference type="EMBL" id="CP000086">
    <property type="protein sequence ID" value="ABC36801.1"/>
    <property type="molecule type" value="Genomic_DNA"/>
</dbReference>
<dbReference type="RefSeq" id="WP_009908597.1">
    <property type="nucleotide sequence ID" value="NZ_CP008785.1"/>
</dbReference>
<dbReference type="SMR" id="Q2T0C0"/>
<dbReference type="MEROPS" id="M17.003"/>
<dbReference type="GeneID" id="45120579"/>
<dbReference type="KEGG" id="bte:BTH_I0823"/>
<dbReference type="HOGENOM" id="CLU_013734_2_2_4"/>
<dbReference type="Proteomes" id="UP000001930">
    <property type="component" value="Chromosome I"/>
</dbReference>
<dbReference type="GO" id="GO:0005737">
    <property type="term" value="C:cytoplasm"/>
    <property type="evidence" value="ECO:0007669"/>
    <property type="project" value="UniProtKB-SubCell"/>
</dbReference>
<dbReference type="GO" id="GO:0030145">
    <property type="term" value="F:manganese ion binding"/>
    <property type="evidence" value="ECO:0007669"/>
    <property type="project" value="UniProtKB-UniRule"/>
</dbReference>
<dbReference type="GO" id="GO:0070006">
    <property type="term" value="F:metalloaminopeptidase activity"/>
    <property type="evidence" value="ECO:0007669"/>
    <property type="project" value="InterPro"/>
</dbReference>
<dbReference type="GO" id="GO:0006508">
    <property type="term" value="P:proteolysis"/>
    <property type="evidence" value="ECO:0007669"/>
    <property type="project" value="UniProtKB-KW"/>
</dbReference>
<dbReference type="CDD" id="cd00433">
    <property type="entry name" value="Peptidase_M17"/>
    <property type="match status" value="1"/>
</dbReference>
<dbReference type="FunFam" id="3.40.630.10:FF:000004">
    <property type="entry name" value="Probable cytosol aminopeptidase"/>
    <property type="match status" value="1"/>
</dbReference>
<dbReference type="Gene3D" id="3.40.220.10">
    <property type="entry name" value="Leucine Aminopeptidase, subunit E, domain 1"/>
    <property type="match status" value="1"/>
</dbReference>
<dbReference type="Gene3D" id="3.40.630.10">
    <property type="entry name" value="Zn peptidases"/>
    <property type="match status" value="1"/>
</dbReference>
<dbReference type="HAMAP" id="MF_00181">
    <property type="entry name" value="Cytosol_peptidase_M17"/>
    <property type="match status" value="1"/>
</dbReference>
<dbReference type="InterPro" id="IPR011356">
    <property type="entry name" value="Leucine_aapep/pepB"/>
</dbReference>
<dbReference type="InterPro" id="IPR043472">
    <property type="entry name" value="Macro_dom-like"/>
</dbReference>
<dbReference type="InterPro" id="IPR000819">
    <property type="entry name" value="Peptidase_M17_C"/>
</dbReference>
<dbReference type="InterPro" id="IPR023042">
    <property type="entry name" value="Peptidase_M17_leu_NH2_pept"/>
</dbReference>
<dbReference type="InterPro" id="IPR008283">
    <property type="entry name" value="Peptidase_M17_N"/>
</dbReference>
<dbReference type="NCBIfam" id="NF002073">
    <property type="entry name" value="PRK00913.1-2"/>
    <property type="match status" value="1"/>
</dbReference>
<dbReference type="NCBIfam" id="NF002074">
    <property type="entry name" value="PRK00913.1-4"/>
    <property type="match status" value="1"/>
</dbReference>
<dbReference type="NCBIfam" id="NF002077">
    <property type="entry name" value="PRK00913.2-4"/>
    <property type="match status" value="1"/>
</dbReference>
<dbReference type="NCBIfam" id="NF002083">
    <property type="entry name" value="PRK00913.3-5"/>
    <property type="match status" value="1"/>
</dbReference>
<dbReference type="PANTHER" id="PTHR11963:SF23">
    <property type="entry name" value="CYTOSOL AMINOPEPTIDASE"/>
    <property type="match status" value="1"/>
</dbReference>
<dbReference type="PANTHER" id="PTHR11963">
    <property type="entry name" value="LEUCINE AMINOPEPTIDASE-RELATED"/>
    <property type="match status" value="1"/>
</dbReference>
<dbReference type="Pfam" id="PF00883">
    <property type="entry name" value="Peptidase_M17"/>
    <property type="match status" value="1"/>
</dbReference>
<dbReference type="Pfam" id="PF02789">
    <property type="entry name" value="Peptidase_M17_N"/>
    <property type="match status" value="1"/>
</dbReference>
<dbReference type="PRINTS" id="PR00481">
    <property type="entry name" value="LAMNOPPTDASE"/>
</dbReference>
<dbReference type="SUPFAM" id="SSF52949">
    <property type="entry name" value="Macro domain-like"/>
    <property type="match status" value="1"/>
</dbReference>
<dbReference type="SUPFAM" id="SSF53187">
    <property type="entry name" value="Zn-dependent exopeptidases"/>
    <property type="match status" value="1"/>
</dbReference>
<dbReference type="PROSITE" id="PS00631">
    <property type="entry name" value="CYTOSOL_AP"/>
    <property type="match status" value="1"/>
</dbReference>
<name>AMPA_BURTA</name>
<evidence type="ECO:0000255" key="1">
    <source>
        <dbReference type="HAMAP-Rule" id="MF_00181"/>
    </source>
</evidence>
<feature type="chain" id="PRO_1000019900" description="Probable cytosol aminopeptidase">
    <location>
        <begin position="1"/>
        <end position="503"/>
    </location>
</feature>
<feature type="active site" evidence="1">
    <location>
        <position position="286"/>
    </location>
</feature>
<feature type="active site" evidence="1">
    <location>
        <position position="360"/>
    </location>
</feature>
<feature type="binding site" evidence="1">
    <location>
        <position position="274"/>
    </location>
    <ligand>
        <name>Mn(2+)</name>
        <dbReference type="ChEBI" id="CHEBI:29035"/>
        <label>2</label>
    </ligand>
</feature>
<feature type="binding site" evidence="1">
    <location>
        <position position="279"/>
    </location>
    <ligand>
        <name>Mn(2+)</name>
        <dbReference type="ChEBI" id="CHEBI:29035"/>
        <label>1</label>
    </ligand>
</feature>
<feature type="binding site" evidence="1">
    <location>
        <position position="279"/>
    </location>
    <ligand>
        <name>Mn(2+)</name>
        <dbReference type="ChEBI" id="CHEBI:29035"/>
        <label>2</label>
    </ligand>
</feature>
<feature type="binding site" evidence="1">
    <location>
        <position position="297"/>
    </location>
    <ligand>
        <name>Mn(2+)</name>
        <dbReference type="ChEBI" id="CHEBI:29035"/>
        <label>2</label>
    </ligand>
</feature>
<feature type="binding site" evidence="1">
    <location>
        <position position="356"/>
    </location>
    <ligand>
        <name>Mn(2+)</name>
        <dbReference type="ChEBI" id="CHEBI:29035"/>
        <label>1</label>
    </ligand>
</feature>
<feature type="binding site" evidence="1">
    <location>
        <position position="358"/>
    </location>
    <ligand>
        <name>Mn(2+)</name>
        <dbReference type="ChEBI" id="CHEBI:29035"/>
        <label>1</label>
    </ligand>
</feature>
<feature type="binding site" evidence="1">
    <location>
        <position position="358"/>
    </location>
    <ligand>
        <name>Mn(2+)</name>
        <dbReference type="ChEBI" id="CHEBI:29035"/>
        <label>2</label>
    </ligand>
</feature>
<keyword id="KW-0031">Aminopeptidase</keyword>
<keyword id="KW-0963">Cytoplasm</keyword>
<keyword id="KW-0378">Hydrolase</keyword>
<keyword id="KW-0464">Manganese</keyword>
<keyword id="KW-0479">Metal-binding</keyword>
<keyword id="KW-0645">Protease</keyword>